<comment type="function">
    <text evidence="1">Formation of pseudouridine at positions 38, 39 and 40 in the anticodon stem and loop of transfer RNAs.</text>
</comment>
<comment type="catalytic activity">
    <reaction evidence="1">
        <text>uridine(38/39/40) in tRNA = pseudouridine(38/39/40) in tRNA</text>
        <dbReference type="Rhea" id="RHEA:22376"/>
        <dbReference type="Rhea" id="RHEA-COMP:10085"/>
        <dbReference type="Rhea" id="RHEA-COMP:10087"/>
        <dbReference type="ChEBI" id="CHEBI:65314"/>
        <dbReference type="ChEBI" id="CHEBI:65315"/>
        <dbReference type="EC" id="5.4.99.12"/>
    </reaction>
</comment>
<comment type="subunit">
    <text evidence="1">Homodimer.</text>
</comment>
<comment type="similarity">
    <text evidence="1">Belongs to the tRNA pseudouridine synthase TruA family.</text>
</comment>
<proteinExistence type="inferred from homology"/>
<accession>C4LF13</accession>
<keyword id="KW-0413">Isomerase</keyword>
<keyword id="KW-1185">Reference proteome</keyword>
<keyword id="KW-0819">tRNA processing</keyword>
<organism>
    <name type="scientific">Tolumonas auensis (strain DSM 9187 / NBRC 110442 / TA 4)</name>
    <dbReference type="NCBI Taxonomy" id="595494"/>
    <lineage>
        <taxon>Bacteria</taxon>
        <taxon>Pseudomonadati</taxon>
        <taxon>Pseudomonadota</taxon>
        <taxon>Gammaproteobacteria</taxon>
        <taxon>Aeromonadales</taxon>
        <taxon>Aeromonadaceae</taxon>
        <taxon>Tolumonas</taxon>
    </lineage>
</organism>
<gene>
    <name evidence="1" type="primary">truA</name>
    <name type="ordered locus">Tola_1569</name>
</gene>
<name>TRUA_TOLAT</name>
<feature type="chain" id="PRO_1000203704" description="tRNA pseudouridine synthase A">
    <location>
        <begin position="1"/>
        <end position="261"/>
    </location>
</feature>
<feature type="active site" description="Nucleophile" evidence="1">
    <location>
        <position position="51"/>
    </location>
</feature>
<feature type="binding site" evidence="1">
    <location>
        <position position="109"/>
    </location>
    <ligand>
        <name>substrate</name>
    </ligand>
</feature>
<reference key="1">
    <citation type="submission" date="2009-05" db="EMBL/GenBank/DDBJ databases">
        <title>Complete sequence of Tolumonas auensis DSM 9187.</title>
        <authorList>
            <consortium name="US DOE Joint Genome Institute"/>
            <person name="Lucas S."/>
            <person name="Copeland A."/>
            <person name="Lapidus A."/>
            <person name="Glavina del Rio T."/>
            <person name="Tice H."/>
            <person name="Bruce D."/>
            <person name="Goodwin L."/>
            <person name="Pitluck S."/>
            <person name="Chertkov O."/>
            <person name="Brettin T."/>
            <person name="Detter J.C."/>
            <person name="Han C."/>
            <person name="Larimer F."/>
            <person name="Land M."/>
            <person name="Hauser L."/>
            <person name="Kyrpides N."/>
            <person name="Mikhailova N."/>
            <person name="Spring S."/>
            <person name="Beller H."/>
        </authorList>
    </citation>
    <scope>NUCLEOTIDE SEQUENCE [LARGE SCALE GENOMIC DNA]</scope>
    <source>
        <strain>DSM 9187 / NBRC 110442 / TA 4</strain>
    </source>
</reference>
<sequence length="261" mass="29240">MRIALGIEYFGADYYGWQRQREVNSVQQELETALSRVANHPVEIQCAGRTDAGVNATGQVIHFDTTANRQMSAWTLGINAQLPDDIAVRWAHVVDDNFHARFSATARRYRYIIYNEPLRPGILAKGVSHYYHPLNADQMNEAGQLLLGERDFTSFRAAQCQSNTPFRNIMSLSVHRAGSYVILDIQANAFLHHMVRNIMGSLLLVGTGEKPKEWIGEILDAKDRTVSGATAKAEGLYLVDVTYPLHYGLPKPPLGPLWFNA</sequence>
<evidence type="ECO:0000255" key="1">
    <source>
        <dbReference type="HAMAP-Rule" id="MF_00171"/>
    </source>
</evidence>
<protein>
    <recommendedName>
        <fullName evidence="1">tRNA pseudouridine synthase A</fullName>
        <ecNumber evidence="1">5.4.99.12</ecNumber>
    </recommendedName>
    <alternativeName>
        <fullName evidence="1">tRNA pseudouridine(38-40) synthase</fullName>
    </alternativeName>
    <alternativeName>
        <fullName evidence="1">tRNA pseudouridylate synthase I</fullName>
    </alternativeName>
    <alternativeName>
        <fullName evidence="1">tRNA-uridine isomerase I</fullName>
    </alternativeName>
</protein>
<dbReference type="EC" id="5.4.99.12" evidence="1"/>
<dbReference type="EMBL" id="CP001616">
    <property type="protein sequence ID" value="ACQ93180.1"/>
    <property type="molecule type" value="Genomic_DNA"/>
</dbReference>
<dbReference type="RefSeq" id="WP_015878651.1">
    <property type="nucleotide sequence ID" value="NC_012691.1"/>
</dbReference>
<dbReference type="SMR" id="C4LF13"/>
<dbReference type="STRING" id="595494.Tola_1569"/>
<dbReference type="KEGG" id="tau:Tola_1569"/>
<dbReference type="eggNOG" id="COG0101">
    <property type="taxonomic scope" value="Bacteria"/>
</dbReference>
<dbReference type="HOGENOM" id="CLU_014673_0_2_6"/>
<dbReference type="OrthoDB" id="9811823at2"/>
<dbReference type="Proteomes" id="UP000009073">
    <property type="component" value="Chromosome"/>
</dbReference>
<dbReference type="GO" id="GO:0003723">
    <property type="term" value="F:RNA binding"/>
    <property type="evidence" value="ECO:0007669"/>
    <property type="project" value="InterPro"/>
</dbReference>
<dbReference type="GO" id="GO:0160147">
    <property type="term" value="F:tRNA pseudouridine(38-40) synthase activity"/>
    <property type="evidence" value="ECO:0007669"/>
    <property type="project" value="UniProtKB-EC"/>
</dbReference>
<dbReference type="GO" id="GO:0031119">
    <property type="term" value="P:tRNA pseudouridine synthesis"/>
    <property type="evidence" value="ECO:0007669"/>
    <property type="project" value="UniProtKB-UniRule"/>
</dbReference>
<dbReference type="CDD" id="cd02570">
    <property type="entry name" value="PseudoU_synth_EcTruA"/>
    <property type="match status" value="1"/>
</dbReference>
<dbReference type="FunFam" id="3.30.70.580:FF:000001">
    <property type="entry name" value="tRNA pseudouridine synthase A"/>
    <property type="match status" value="1"/>
</dbReference>
<dbReference type="FunFam" id="3.30.70.660:FF:000001">
    <property type="entry name" value="tRNA pseudouridine synthase A"/>
    <property type="match status" value="1"/>
</dbReference>
<dbReference type="Gene3D" id="3.30.70.660">
    <property type="entry name" value="Pseudouridine synthase I, catalytic domain, C-terminal subdomain"/>
    <property type="match status" value="1"/>
</dbReference>
<dbReference type="Gene3D" id="3.30.70.580">
    <property type="entry name" value="Pseudouridine synthase I, catalytic domain, N-terminal subdomain"/>
    <property type="match status" value="1"/>
</dbReference>
<dbReference type="HAMAP" id="MF_00171">
    <property type="entry name" value="TruA"/>
    <property type="match status" value="1"/>
</dbReference>
<dbReference type="InterPro" id="IPR020103">
    <property type="entry name" value="PsdUridine_synth_cat_dom_sf"/>
</dbReference>
<dbReference type="InterPro" id="IPR001406">
    <property type="entry name" value="PsdUridine_synth_TruA"/>
</dbReference>
<dbReference type="InterPro" id="IPR020097">
    <property type="entry name" value="PsdUridine_synth_TruA_a/b_dom"/>
</dbReference>
<dbReference type="InterPro" id="IPR020095">
    <property type="entry name" value="PsdUridine_synth_TruA_C"/>
</dbReference>
<dbReference type="InterPro" id="IPR020094">
    <property type="entry name" value="TruA/RsuA/RluB/E/F_N"/>
</dbReference>
<dbReference type="NCBIfam" id="TIGR00071">
    <property type="entry name" value="hisT_truA"/>
    <property type="match status" value="1"/>
</dbReference>
<dbReference type="PANTHER" id="PTHR11142">
    <property type="entry name" value="PSEUDOURIDYLATE SYNTHASE"/>
    <property type="match status" value="1"/>
</dbReference>
<dbReference type="PANTHER" id="PTHR11142:SF0">
    <property type="entry name" value="TRNA PSEUDOURIDINE SYNTHASE-LIKE 1"/>
    <property type="match status" value="1"/>
</dbReference>
<dbReference type="Pfam" id="PF01416">
    <property type="entry name" value="PseudoU_synth_1"/>
    <property type="match status" value="2"/>
</dbReference>
<dbReference type="PIRSF" id="PIRSF001430">
    <property type="entry name" value="tRNA_psdUrid_synth"/>
    <property type="match status" value="1"/>
</dbReference>
<dbReference type="SUPFAM" id="SSF55120">
    <property type="entry name" value="Pseudouridine synthase"/>
    <property type="match status" value="1"/>
</dbReference>